<keyword id="KW-0349">Heme</keyword>
<keyword id="KW-0376">Hydrogen peroxide</keyword>
<keyword id="KW-0408">Iron</keyword>
<keyword id="KW-0479">Metal-binding</keyword>
<keyword id="KW-0560">Oxidoreductase</keyword>
<keyword id="KW-0575">Peroxidase</keyword>
<keyword id="KW-1185">Reference proteome</keyword>
<reference key="1">
    <citation type="journal article" date="2004" name="Proc. Natl. Acad. Sci. U.S.A.">
        <title>Structural flexibility in the Burkholderia mallei genome.</title>
        <authorList>
            <person name="Nierman W.C."/>
            <person name="DeShazer D."/>
            <person name="Kim H.S."/>
            <person name="Tettelin H."/>
            <person name="Nelson K.E."/>
            <person name="Feldblyum T.V."/>
            <person name="Ulrich R.L."/>
            <person name="Ronning C.M."/>
            <person name="Brinkac L.M."/>
            <person name="Daugherty S.C."/>
            <person name="Davidsen T.D."/>
            <person name="DeBoy R.T."/>
            <person name="Dimitrov G."/>
            <person name="Dodson R.J."/>
            <person name="Durkin A.S."/>
            <person name="Gwinn M.L."/>
            <person name="Haft D.H."/>
            <person name="Khouri H.M."/>
            <person name="Kolonay J.F."/>
            <person name="Madupu R."/>
            <person name="Mohammoud Y."/>
            <person name="Nelson W.C."/>
            <person name="Radune D."/>
            <person name="Romero C.M."/>
            <person name="Sarria S."/>
            <person name="Selengut J."/>
            <person name="Shamblin C."/>
            <person name="Sullivan S.A."/>
            <person name="White O."/>
            <person name="Yu Y."/>
            <person name="Zafar N."/>
            <person name="Zhou L."/>
            <person name="Fraser C.M."/>
        </authorList>
    </citation>
    <scope>NUCLEOTIDE SEQUENCE [LARGE SCALE GENOMIC DNA]</scope>
    <source>
        <strain>ATCC 23344</strain>
    </source>
</reference>
<accession>Q62H74</accession>
<dbReference type="EC" id="1.11.1.21" evidence="1"/>
<dbReference type="EMBL" id="CP000010">
    <property type="protein sequence ID" value="AAU50182.1"/>
    <property type="molecule type" value="Genomic_DNA"/>
</dbReference>
<dbReference type="RefSeq" id="WP_004194237.1">
    <property type="nucleotide sequence ID" value="NC_006348.1"/>
</dbReference>
<dbReference type="RefSeq" id="YP_103946.1">
    <property type="nucleotide sequence ID" value="NC_006348.1"/>
</dbReference>
<dbReference type="SMR" id="Q62H74"/>
<dbReference type="PeroxiBase" id="2298">
    <property type="entry name" value="BmCP01_23344"/>
</dbReference>
<dbReference type="GeneID" id="93061455"/>
<dbReference type="KEGG" id="bma:BMA2391"/>
<dbReference type="PATRIC" id="fig|243160.12.peg.2466"/>
<dbReference type="eggNOG" id="COG0376">
    <property type="taxonomic scope" value="Bacteria"/>
</dbReference>
<dbReference type="HOGENOM" id="CLU_025424_2_0_4"/>
<dbReference type="Proteomes" id="UP000006693">
    <property type="component" value="Chromosome 1"/>
</dbReference>
<dbReference type="GO" id="GO:0005829">
    <property type="term" value="C:cytosol"/>
    <property type="evidence" value="ECO:0007669"/>
    <property type="project" value="TreeGrafter"/>
</dbReference>
<dbReference type="GO" id="GO:0004096">
    <property type="term" value="F:catalase activity"/>
    <property type="evidence" value="ECO:0007669"/>
    <property type="project" value="UniProtKB-UniRule"/>
</dbReference>
<dbReference type="GO" id="GO:0020037">
    <property type="term" value="F:heme binding"/>
    <property type="evidence" value="ECO:0007669"/>
    <property type="project" value="InterPro"/>
</dbReference>
<dbReference type="GO" id="GO:0046872">
    <property type="term" value="F:metal ion binding"/>
    <property type="evidence" value="ECO:0007669"/>
    <property type="project" value="UniProtKB-KW"/>
</dbReference>
<dbReference type="GO" id="GO:0070301">
    <property type="term" value="P:cellular response to hydrogen peroxide"/>
    <property type="evidence" value="ECO:0007669"/>
    <property type="project" value="TreeGrafter"/>
</dbReference>
<dbReference type="GO" id="GO:0042744">
    <property type="term" value="P:hydrogen peroxide catabolic process"/>
    <property type="evidence" value="ECO:0007669"/>
    <property type="project" value="UniProtKB-KW"/>
</dbReference>
<dbReference type="CDD" id="cd00649">
    <property type="entry name" value="catalase_peroxidase_1"/>
    <property type="match status" value="1"/>
</dbReference>
<dbReference type="CDD" id="cd08200">
    <property type="entry name" value="catalase_peroxidase_2"/>
    <property type="match status" value="1"/>
</dbReference>
<dbReference type="FunFam" id="1.10.420.10:FF:000002">
    <property type="entry name" value="Catalase-peroxidase"/>
    <property type="match status" value="1"/>
</dbReference>
<dbReference type="FunFam" id="1.10.420.10:FF:000004">
    <property type="entry name" value="Catalase-peroxidase"/>
    <property type="match status" value="1"/>
</dbReference>
<dbReference type="FunFam" id="1.10.520.10:FF:000002">
    <property type="entry name" value="Catalase-peroxidase"/>
    <property type="match status" value="1"/>
</dbReference>
<dbReference type="FunFam" id="1.10.520.10:FF:000004">
    <property type="entry name" value="Catalase-peroxidase"/>
    <property type="match status" value="1"/>
</dbReference>
<dbReference type="Gene3D" id="1.10.520.10">
    <property type="match status" value="2"/>
</dbReference>
<dbReference type="Gene3D" id="1.10.420.10">
    <property type="entry name" value="Peroxidase, domain 2"/>
    <property type="match status" value="2"/>
</dbReference>
<dbReference type="HAMAP" id="MF_01961">
    <property type="entry name" value="Catal_peroxid"/>
    <property type="match status" value="1"/>
</dbReference>
<dbReference type="InterPro" id="IPR000763">
    <property type="entry name" value="Catalase_peroxidase"/>
</dbReference>
<dbReference type="InterPro" id="IPR002016">
    <property type="entry name" value="Haem_peroxidase"/>
</dbReference>
<dbReference type="InterPro" id="IPR010255">
    <property type="entry name" value="Haem_peroxidase_sf"/>
</dbReference>
<dbReference type="InterPro" id="IPR019794">
    <property type="entry name" value="Peroxidases_AS"/>
</dbReference>
<dbReference type="InterPro" id="IPR019793">
    <property type="entry name" value="Peroxidases_heam-ligand_BS"/>
</dbReference>
<dbReference type="NCBIfam" id="TIGR00198">
    <property type="entry name" value="cat_per_HPI"/>
    <property type="match status" value="1"/>
</dbReference>
<dbReference type="NCBIfam" id="NF011635">
    <property type="entry name" value="PRK15061.1"/>
    <property type="match status" value="1"/>
</dbReference>
<dbReference type="PANTHER" id="PTHR30555:SF0">
    <property type="entry name" value="CATALASE-PEROXIDASE"/>
    <property type="match status" value="1"/>
</dbReference>
<dbReference type="PANTHER" id="PTHR30555">
    <property type="entry name" value="HYDROPEROXIDASE I, BIFUNCTIONAL CATALASE-PEROXIDASE"/>
    <property type="match status" value="1"/>
</dbReference>
<dbReference type="Pfam" id="PF00141">
    <property type="entry name" value="peroxidase"/>
    <property type="match status" value="2"/>
</dbReference>
<dbReference type="PRINTS" id="PR00460">
    <property type="entry name" value="BPEROXIDASE"/>
</dbReference>
<dbReference type="PRINTS" id="PR00458">
    <property type="entry name" value="PEROXIDASE"/>
</dbReference>
<dbReference type="SUPFAM" id="SSF48113">
    <property type="entry name" value="Heme-dependent peroxidases"/>
    <property type="match status" value="2"/>
</dbReference>
<dbReference type="PROSITE" id="PS00435">
    <property type="entry name" value="PEROXIDASE_1"/>
    <property type="match status" value="1"/>
</dbReference>
<dbReference type="PROSITE" id="PS00436">
    <property type="entry name" value="PEROXIDASE_2"/>
    <property type="match status" value="1"/>
</dbReference>
<dbReference type="PROSITE" id="PS50873">
    <property type="entry name" value="PEROXIDASE_4"/>
    <property type="match status" value="1"/>
</dbReference>
<protein>
    <recommendedName>
        <fullName evidence="1">Catalase-peroxidase</fullName>
        <shortName evidence="1">CP</shortName>
        <ecNumber evidence="1">1.11.1.21</ecNumber>
    </recommendedName>
    <alternativeName>
        <fullName evidence="1">Peroxidase/catalase</fullName>
    </alternativeName>
</protein>
<sequence length="728" mass="79388">MSNEAKCPFHQAAGNGTSNRDWWPNQLDLSILHRHSSLSDPMGKDFNYAQAFEKLDLAAVKRDLHALMTTSQDWWPADFGHYGGLFIRMAWHSAGTYRTADGRGGAGEGQQRFAPLNSWPDNANLDKARRLLWPIKQKYGRAISWADLLILTGNVALESMGFKTFGFAGGRADTWEPEDVYWGSEKIWLELSGGPNSRYSGDRQLENPLAAVQMGLIYVNPEGPDGNPDPVAAARDIRDTFARMAMNDEETVALIAGGHTFGKTHGAGPASNVGAEPEAAGIEAQGLGWKSAYRTGKGADAITSGLEVTWTTTPTQWSHNFFENLFGYEWELTKSPAGAHQWVAKGADAVIPDAFDPSKKHRPTMLTTDLSLRFDPAYEKISRRFHENPEQFADAFARAWFKLTHRDMGPRARYLGPEVPAEVLLWQDPIPAVDHPLIDAADAAELKAKVLASGLTVSQLVSTAWAAASTFRGSDKRGGANGARIRLAPQKDWEANQPEQLAAVLETLEAIRTAFNGAQRGGKQVSLADLIVLAGCAGVEQAAKNAGHAVTVPFAPGRADASQEQTDVESMAVLEPVADGFRNYLKGKYRVPAEVLLVDKAQLLTLSAPEMTVLLGGLRVLGANVGQSRHGVFTAREQALTNDFFVNLLDMGTEWKPTAADADVFEGRDRATGALKWTGTRVDLVFGSHSQLRALAEVYGSADAQEKFVRDFVAVWNKVMNLDRFDLA</sequence>
<comment type="function">
    <text evidence="1">Bifunctional enzyme with both catalase and broad-spectrum peroxidase activity.</text>
</comment>
<comment type="catalytic activity">
    <reaction evidence="1">
        <text>H2O2 + AH2 = A + 2 H2O</text>
        <dbReference type="Rhea" id="RHEA:30275"/>
        <dbReference type="ChEBI" id="CHEBI:13193"/>
        <dbReference type="ChEBI" id="CHEBI:15377"/>
        <dbReference type="ChEBI" id="CHEBI:16240"/>
        <dbReference type="ChEBI" id="CHEBI:17499"/>
        <dbReference type="EC" id="1.11.1.21"/>
    </reaction>
</comment>
<comment type="catalytic activity">
    <reaction evidence="1">
        <text>2 H2O2 = O2 + 2 H2O</text>
        <dbReference type="Rhea" id="RHEA:20309"/>
        <dbReference type="ChEBI" id="CHEBI:15377"/>
        <dbReference type="ChEBI" id="CHEBI:15379"/>
        <dbReference type="ChEBI" id="CHEBI:16240"/>
        <dbReference type="EC" id="1.11.1.21"/>
    </reaction>
</comment>
<comment type="cofactor">
    <cofactor evidence="1">
        <name>heme b</name>
        <dbReference type="ChEBI" id="CHEBI:60344"/>
    </cofactor>
    <text evidence="1">Binds 1 heme b (iron(II)-protoporphyrin IX) group per dimer.</text>
</comment>
<comment type="subunit">
    <text evidence="1">Homodimer or homotetramer.</text>
</comment>
<comment type="PTM">
    <text evidence="1">Formation of the three residue Trp-Tyr-Met cross-link is important for the catalase, but not the peroxidase activity of the enzyme.</text>
</comment>
<comment type="similarity">
    <text evidence="1">Belongs to the peroxidase family. Peroxidase/catalase subfamily.</text>
</comment>
<proteinExistence type="inferred from homology"/>
<name>KATG_BURMA</name>
<feature type="chain" id="PRO_0000354741" description="Catalase-peroxidase">
    <location>
        <begin position="1"/>
        <end position="728"/>
    </location>
</feature>
<feature type="active site" description="Proton acceptor" evidence="1">
    <location>
        <position position="92"/>
    </location>
</feature>
<feature type="binding site" description="axial binding residue" evidence="1">
    <location>
        <position position="259"/>
    </location>
    <ligand>
        <name>heme b</name>
        <dbReference type="ChEBI" id="CHEBI:60344"/>
    </ligand>
    <ligandPart>
        <name>Fe</name>
        <dbReference type="ChEBI" id="CHEBI:18248"/>
    </ligandPart>
</feature>
<feature type="site" description="Transition state stabilizer" evidence="1">
    <location>
        <position position="88"/>
    </location>
</feature>
<feature type="cross-link" description="Tryptophyl-tyrosyl-methioninium (Trp-Tyr) (with M-244)" evidence="1">
    <location>
        <begin position="91"/>
        <end position="218"/>
    </location>
</feature>
<feature type="cross-link" description="Tryptophyl-tyrosyl-methioninium (Tyr-Met) (with W-91)" evidence="1">
    <location>
        <begin position="218"/>
        <end position="244"/>
    </location>
</feature>
<evidence type="ECO:0000255" key="1">
    <source>
        <dbReference type="HAMAP-Rule" id="MF_01961"/>
    </source>
</evidence>
<gene>
    <name evidence="1" type="primary">katG</name>
    <name type="ordered locus">BMA2391</name>
</gene>
<organism>
    <name type="scientific">Burkholderia mallei (strain ATCC 23344)</name>
    <dbReference type="NCBI Taxonomy" id="243160"/>
    <lineage>
        <taxon>Bacteria</taxon>
        <taxon>Pseudomonadati</taxon>
        <taxon>Pseudomonadota</taxon>
        <taxon>Betaproteobacteria</taxon>
        <taxon>Burkholderiales</taxon>
        <taxon>Burkholderiaceae</taxon>
        <taxon>Burkholderia</taxon>
        <taxon>pseudomallei group</taxon>
    </lineage>
</organism>